<keyword id="KW-0046">Antibiotic resistance</keyword>
<keyword id="KW-0997">Cell inner membrane</keyword>
<keyword id="KW-1003">Cell membrane</keyword>
<keyword id="KW-0133">Cell shape</keyword>
<keyword id="KW-0961">Cell wall biogenesis/degradation</keyword>
<keyword id="KW-0378">Hydrolase</keyword>
<keyword id="KW-0472">Membrane</keyword>
<keyword id="KW-0573">Peptidoglycan synthesis</keyword>
<keyword id="KW-0812">Transmembrane</keyword>
<keyword id="KW-1133">Transmembrane helix</keyword>
<evidence type="ECO:0000255" key="1">
    <source>
        <dbReference type="HAMAP-Rule" id="MF_01006"/>
    </source>
</evidence>
<dbReference type="EC" id="3.6.1.27" evidence="1"/>
<dbReference type="EMBL" id="CP000993">
    <property type="protein sequence ID" value="ACH94512.1"/>
    <property type="molecule type" value="Genomic_DNA"/>
</dbReference>
<dbReference type="RefSeq" id="WP_012538779.1">
    <property type="nucleotide sequence ID" value="NZ_CP169983.1"/>
</dbReference>
<dbReference type="SMR" id="B5RR78"/>
<dbReference type="KEGG" id="bre:BRE_265"/>
<dbReference type="HOGENOM" id="CLU_060296_1_0_12"/>
<dbReference type="Proteomes" id="UP000000612">
    <property type="component" value="Chromosome"/>
</dbReference>
<dbReference type="GO" id="GO:0005886">
    <property type="term" value="C:plasma membrane"/>
    <property type="evidence" value="ECO:0007669"/>
    <property type="project" value="UniProtKB-SubCell"/>
</dbReference>
<dbReference type="GO" id="GO:0050380">
    <property type="term" value="F:undecaprenyl-diphosphatase activity"/>
    <property type="evidence" value="ECO:0007669"/>
    <property type="project" value="UniProtKB-UniRule"/>
</dbReference>
<dbReference type="GO" id="GO:0071555">
    <property type="term" value="P:cell wall organization"/>
    <property type="evidence" value="ECO:0007669"/>
    <property type="project" value="UniProtKB-KW"/>
</dbReference>
<dbReference type="GO" id="GO:0009252">
    <property type="term" value="P:peptidoglycan biosynthetic process"/>
    <property type="evidence" value="ECO:0007669"/>
    <property type="project" value="UniProtKB-KW"/>
</dbReference>
<dbReference type="GO" id="GO:0008360">
    <property type="term" value="P:regulation of cell shape"/>
    <property type="evidence" value="ECO:0007669"/>
    <property type="project" value="UniProtKB-KW"/>
</dbReference>
<dbReference type="GO" id="GO:0046677">
    <property type="term" value="P:response to antibiotic"/>
    <property type="evidence" value="ECO:0007669"/>
    <property type="project" value="UniProtKB-UniRule"/>
</dbReference>
<dbReference type="HAMAP" id="MF_01006">
    <property type="entry name" value="Undec_diphosphatase"/>
    <property type="match status" value="1"/>
</dbReference>
<dbReference type="InterPro" id="IPR003824">
    <property type="entry name" value="UppP"/>
</dbReference>
<dbReference type="NCBIfam" id="NF001396">
    <property type="entry name" value="PRK00281.3-3"/>
    <property type="match status" value="1"/>
</dbReference>
<dbReference type="PANTHER" id="PTHR30622">
    <property type="entry name" value="UNDECAPRENYL-DIPHOSPHATASE"/>
    <property type="match status" value="1"/>
</dbReference>
<dbReference type="PANTHER" id="PTHR30622:SF2">
    <property type="entry name" value="UNDECAPRENYL-DIPHOSPHATASE"/>
    <property type="match status" value="1"/>
</dbReference>
<dbReference type="Pfam" id="PF02673">
    <property type="entry name" value="BacA"/>
    <property type="match status" value="1"/>
</dbReference>
<organism>
    <name type="scientific">Borrelia recurrentis (strain A1)</name>
    <dbReference type="NCBI Taxonomy" id="412418"/>
    <lineage>
        <taxon>Bacteria</taxon>
        <taxon>Pseudomonadati</taxon>
        <taxon>Spirochaetota</taxon>
        <taxon>Spirochaetia</taxon>
        <taxon>Spirochaetales</taxon>
        <taxon>Borreliaceae</taxon>
        <taxon>Borrelia</taxon>
    </lineage>
</organism>
<name>UPPP_BORRA</name>
<sequence>MDNILRVIILGFVQGISEFLPISSSGHLLLLKKFMNIDLPIVFDIYLHFATVLVVIIYYRRRILELVMVFIKFILRKSKMTELDSSNLNLILLILIITFFTALIGIFIEKFKVLFTFKLVLFNFIVTSILLFLIEFRIKIFNFKKNIFFSGLLIGIMQGIGAMPGISRSGITIFASILLGFSRTKSLEISFLSLIPIVFGSLFLKYNDLFKSDIIFNIFEINLGAIFAFIFGLFSISLFVKMLKNSKLYYFSIYLVSVVSLVYFLV</sequence>
<protein>
    <recommendedName>
        <fullName evidence="1">Undecaprenyl-diphosphatase</fullName>
        <ecNumber evidence="1">3.6.1.27</ecNumber>
    </recommendedName>
    <alternativeName>
        <fullName evidence="1">Bacitracin resistance protein</fullName>
    </alternativeName>
    <alternativeName>
        <fullName evidence="1">Undecaprenyl pyrophosphate phosphatase</fullName>
    </alternativeName>
</protein>
<proteinExistence type="inferred from homology"/>
<reference key="1">
    <citation type="journal article" date="2008" name="PLoS Genet.">
        <title>The genome of Borrelia recurrentis, the agent of deadly louse-borne relapsing fever, is a degraded subset of tick-borne Borrelia duttonii.</title>
        <authorList>
            <person name="Lescot M."/>
            <person name="Audic S."/>
            <person name="Robert C."/>
            <person name="Nguyen T.T."/>
            <person name="Blanc G."/>
            <person name="Cutler S.J."/>
            <person name="Wincker P."/>
            <person name="Couloux A."/>
            <person name="Claverie J.-M."/>
            <person name="Raoult D."/>
            <person name="Drancourt M."/>
        </authorList>
    </citation>
    <scope>NUCLEOTIDE SEQUENCE [LARGE SCALE GENOMIC DNA]</scope>
    <source>
        <strain>A1</strain>
    </source>
</reference>
<feature type="chain" id="PRO_1000197353" description="Undecaprenyl-diphosphatase">
    <location>
        <begin position="1"/>
        <end position="266"/>
    </location>
</feature>
<feature type="transmembrane region" description="Helical" evidence="1">
    <location>
        <begin position="4"/>
        <end position="24"/>
    </location>
</feature>
<feature type="transmembrane region" description="Helical" evidence="1">
    <location>
        <begin position="39"/>
        <end position="59"/>
    </location>
</feature>
<feature type="transmembrane region" description="Helical" evidence="1">
    <location>
        <begin position="88"/>
        <end position="108"/>
    </location>
</feature>
<feature type="transmembrane region" description="Helical" evidence="1">
    <location>
        <begin position="114"/>
        <end position="134"/>
    </location>
</feature>
<feature type="transmembrane region" description="Helical" evidence="1">
    <location>
        <begin position="147"/>
        <end position="167"/>
    </location>
</feature>
<feature type="transmembrane region" description="Helical" evidence="1">
    <location>
        <begin position="186"/>
        <end position="206"/>
    </location>
</feature>
<feature type="transmembrane region" description="Helical" evidence="1">
    <location>
        <begin position="214"/>
        <end position="234"/>
    </location>
</feature>
<feature type="transmembrane region" description="Helical" evidence="1">
    <location>
        <begin position="246"/>
        <end position="266"/>
    </location>
</feature>
<accession>B5RR78</accession>
<gene>
    <name evidence="1" type="primary">uppP</name>
    <name type="ordered locus">BRE_265</name>
</gene>
<comment type="function">
    <text evidence="1">Catalyzes the dephosphorylation of undecaprenyl diphosphate (UPP). Confers resistance to bacitracin.</text>
</comment>
<comment type="catalytic activity">
    <reaction evidence="1">
        <text>di-trans,octa-cis-undecaprenyl diphosphate + H2O = di-trans,octa-cis-undecaprenyl phosphate + phosphate + H(+)</text>
        <dbReference type="Rhea" id="RHEA:28094"/>
        <dbReference type="ChEBI" id="CHEBI:15377"/>
        <dbReference type="ChEBI" id="CHEBI:15378"/>
        <dbReference type="ChEBI" id="CHEBI:43474"/>
        <dbReference type="ChEBI" id="CHEBI:58405"/>
        <dbReference type="ChEBI" id="CHEBI:60392"/>
        <dbReference type="EC" id="3.6.1.27"/>
    </reaction>
</comment>
<comment type="subcellular location">
    <subcellularLocation>
        <location evidence="1">Cell inner membrane</location>
        <topology evidence="1">Multi-pass membrane protein</topology>
    </subcellularLocation>
</comment>
<comment type="miscellaneous">
    <text>Bacitracin is thought to be involved in the inhibition of peptidoglycan synthesis by sequestering undecaprenyl diphosphate, thereby reducing the pool of lipid carrier available.</text>
</comment>
<comment type="similarity">
    <text evidence="1">Belongs to the UppP family.</text>
</comment>